<name>NDK_FLAPJ</name>
<dbReference type="EC" id="2.7.4.6" evidence="1"/>
<dbReference type="EMBL" id="AM398681">
    <property type="protein sequence ID" value="CAL43485.1"/>
    <property type="molecule type" value="Genomic_DNA"/>
</dbReference>
<dbReference type="RefSeq" id="WP_011963530.1">
    <property type="nucleotide sequence ID" value="NC_009613.3"/>
</dbReference>
<dbReference type="RefSeq" id="YP_001296294.1">
    <property type="nucleotide sequence ID" value="NC_009613.3"/>
</dbReference>
<dbReference type="SMR" id="A6GZG2"/>
<dbReference type="STRING" id="402612.FP1409"/>
<dbReference type="EnsemblBacteria" id="CAL43485">
    <property type="protein sequence ID" value="CAL43485"/>
    <property type="gene ID" value="FP1409"/>
</dbReference>
<dbReference type="KEGG" id="fps:FP1409"/>
<dbReference type="PATRIC" id="fig|402612.5.peg.1422"/>
<dbReference type="eggNOG" id="COG0105">
    <property type="taxonomic scope" value="Bacteria"/>
</dbReference>
<dbReference type="HOGENOM" id="CLU_060216_8_1_10"/>
<dbReference type="OrthoDB" id="9801161at2"/>
<dbReference type="Proteomes" id="UP000006394">
    <property type="component" value="Chromosome"/>
</dbReference>
<dbReference type="GO" id="GO:0005737">
    <property type="term" value="C:cytoplasm"/>
    <property type="evidence" value="ECO:0007669"/>
    <property type="project" value="UniProtKB-SubCell"/>
</dbReference>
<dbReference type="GO" id="GO:0005524">
    <property type="term" value="F:ATP binding"/>
    <property type="evidence" value="ECO:0007669"/>
    <property type="project" value="UniProtKB-UniRule"/>
</dbReference>
<dbReference type="GO" id="GO:0046872">
    <property type="term" value="F:metal ion binding"/>
    <property type="evidence" value="ECO:0007669"/>
    <property type="project" value="UniProtKB-KW"/>
</dbReference>
<dbReference type="GO" id="GO:0004550">
    <property type="term" value="F:nucleoside diphosphate kinase activity"/>
    <property type="evidence" value="ECO:0007669"/>
    <property type="project" value="UniProtKB-UniRule"/>
</dbReference>
<dbReference type="GO" id="GO:0006241">
    <property type="term" value="P:CTP biosynthetic process"/>
    <property type="evidence" value="ECO:0007669"/>
    <property type="project" value="UniProtKB-UniRule"/>
</dbReference>
<dbReference type="GO" id="GO:0006183">
    <property type="term" value="P:GTP biosynthetic process"/>
    <property type="evidence" value="ECO:0007669"/>
    <property type="project" value="UniProtKB-UniRule"/>
</dbReference>
<dbReference type="GO" id="GO:0006228">
    <property type="term" value="P:UTP biosynthetic process"/>
    <property type="evidence" value="ECO:0007669"/>
    <property type="project" value="UniProtKB-UniRule"/>
</dbReference>
<dbReference type="CDD" id="cd04413">
    <property type="entry name" value="NDPk_I"/>
    <property type="match status" value="1"/>
</dbReference>
<dbReference type="FunFam" id="3.30.70.141:FF:000017">
    <property type="entry name" value="Nucleoside diphosphate kinase"/>
    <property type="match status" value="1"/>
</dbReference>
<dbReference type="Gene3D" id="3.30.70.141">
    <property type="entry name" value="Nucleoside diphosphate kinase-like domain"/>
    <property type="match status" value="1"/>
</dbReference>
<dbReference type="HAMAP" id="MF_00451">
    <property type="entry name" value="NDP_kinase"/>
    <property type="match status" value="1"/>
</dbReference>
<dbReference type="InterPro" id="IPR034907">
    <property type="entry name" value="NDK-like_dom"/>
</dbReference>
<dbReference type="InterPro" id="IPR036850">
    <property type="entry name" value="NDK-like_dom_sf"/>
</dbReference>
<dbReference type="InterPro" id="IPR001564">
    <property type="entry name" value="Nucleoside_diP_kinase"/>
</dbReference>
<dbReference type="NCBIfam" id="NF001908">
    <property type="entry name" value="PRK00668.1"/>
    <property type="match status" value="1"/>
</dbReference>
<dbReference type="NCBIfam" id="NF011116">
    <property type="entry name" value="PRK14545.1"/>
    <property type="match status" value="1"/>
</dbReference>
<dbReference type="PANTHER" id="PTHR46161">
    <property type="entry name" value="NUCLEOSIDE DIPHOSPHATE KINASE"/>
    <property type="match status" value="1"/>
</dbReference>
<dbReference type="PANTHER" id="PTHR46161:SF3">
    <property type="entry name" value="NUCLEOSIDE DIPHOSPHATE KINASE DDB_G0292928-RELATED"/>
    <property type="match status" value="1"/>
</dbReference>
<dbReference type="Pfam" id="PF00334">
    <property type="entry name" value="NDK"/>
    <property type="match status" value="1"/>
</dbReference>
<dbReference type="PRINTS" id="PR01243">
    <property type="entry name" value="NUCDPKINASE"/>
</dbReference>
<dbReference type="SMART" id="SM00562">
    <property type="entry name" value="NDK"/>
    <property type="match status" value="1"/>
</dbReference>
<dbReference type="SUPFAM" id="SSF54919">
    <property type="entry name" value="Nucleoside diphosphate kinase, NDK"/>
    <property type="match status" value="1"/>
</dbReference>
<dbReference type="PROSITE" id="PS51374">
    <property type="entry name" value="NDPK_LIKE"/>
    <property type="match status" value="1"/>
</dbReference>
<protein>
    <recommendedName>
        <fullName evidence="1">Nucleoside diphosphate kinase</fullName>
        <shortName evidence="1">NDK</shortName>
        <shortName evidence="1">NDP kinase</shortName>
        <ecNumber evidence="1">2.7.4.6</ecNumber>
    </recommendedName>
    <alternativeName>
        <fullName evidence="1">Nucleoside-2-P kinase</fullName>
    </alternativeName>
</protein>
<proteinExistence type="inferred from homology"/>
<reference key="1">
    <citation type="journal article" date="2007" name="Nat. Biotechnol.">
        <title>Complete genome sequence of the fish pathogen Flavobacterium psychrophilum.</title>
        <authorList>
            <person name="Duchaud E."/>
            <person name="Boussaha M."/>
            <person name="Loux V."/>
            <person name="Bernardet J.-F."/>
            <person name="Michel C."/>
            <person name="Kerouault B."/>
            <person name="Mondot S."/>
            <person name="Nicolas P."/>
            <person name="Bossy R."/>
            <person name="Caron C."/>
            <person name="Bessieres P."/>
            <person name="Gibrat J.-F."/>
            <person name="Claverol S."/>
            <person name="Dumetz F."/>
            <person name="Le Henaff M."/>
            <person name="Benmansour A."/>
        </authorList>
    </citation>
    <scope>NUCLEOTIDE SEQUENCE [LARGE SCALE GENOMIC DNA]</scope>
    <source>
        <strain>ATCC 49511 / DSM 21280 / CIP 103535 / JIP02/86</strain>
    </source>
</reference>
<gene>
    <name evidence="1" type="primary">ndk</name>
    <name type="ordered locus">FP1409</name>
</gene>
<keyword id="KW-0067">ATP-binding</keyword>
<keyword id="KW-0963">Cytoplasm</keyword>
<keyword id="KW-0418">Kinase</keyword>
<keyword id="KW-0460">Magnesium</keyword>
<keyword id="KW-0479">Metal-binding</keyword>
<keyword id="KW-0546">Nucleotide metabolism</keyword>
<keyword id="KW-0547">Nucleotide-binding</keyword>
<keyword id="KW-0597">Phosphoprotein</keyword>
<keyword id="KW-1185">Reference proteome</keyword>
<keyword id="KW-0808">Transferase</keyword>
<feature type="chain" id="PRO_1000124968" description="Nucleoside diphosphate kinase">
    <location>
        <begin position="1"/>
        <end position="139"/>
    </location>
</feature>
<feature type="active site" description="Pros-phosphohistidine intermediate" evidence="1">
    <location>
        <position position="117"/>
    </location>
</feature>
<feature type="binding site" evidence="1">
    <location>
        <position position="11"/>
    </location>
    <ligand>
        <name>ATP</name>
        <dbReference type="ChEBI" id="CHEBI:30616"/>
    </ligand>
</feature>
<feature type="binding site" evidence="1">
    <location>
        <position position="59"/>
    </location>
    <ligand>
        <name>ATP</name>
        <dbReference type="ChEBI" id="CHEBI:30616"/>
    </ligand>
</feature>
<feature type="binding site" evidence="1">
    <location>
        <position position="87"/>
    </location>
    <ligand>
        <name>ATP</name>
        <dbReference type="ChEBI" id="CHEBI:30616"/>
    </ligand>
</feature>
<feature type="binding site" evidence="1">
    <location>
        <position position="93"/>
    </location>
    <ligand>
        <name>ATP</name>
        <dbReference type="ChEBI" id="CHEBI:30616"/>
    </ligand>
</feature>
<feature type="binding site" evidence="1">
    <location>
        <position position="104"/>
    </location>
    <ligand>
        <name>ATP</name>
        <dbReference type="ChEBI" id="CHEBI:30616"/>
    </ligand>
</feature>
<feature type="binding site" evidence="1">
    <location>
        <position position="114"/>
    </location>
    <ligand>
        <name>ATP</name>
        <dbReference type="ChEBI" id="CHEBI:30616"/>
    </ligand>
</feature>
<evidence type="ECO:0000255" key="1">
    <source>
        <dbReference type="HAMAP-Rule" id="MF_00451"/>
    </source>
</evidence>
<organism>
    <name type="scientific">Flavobacterium psychrophilum (strain ATCC 49511 / DSM 21280 / CIP 103535 / JIP02/86)</name>
    <dbReference type="NCBI Taxonomy" id="402612"/>
    <lineage>
        <taxon>Bacteria</taxon>
        <taxon>Pseudomonadati</taxon>
        <taxon>Bacteroidota</taxon>
        <taxon>Flavobacteriia</taxon>
        <taxon>Flavobacteriales</taxon>
        <taxon>Flavobacteriaceae</taxon>
        <taxon>Flavobacterium</taxon>
    </lineage>
</organism>
<sequence length="139" mass="14980">MATNRTFTMIKPDGVQNGHIGGIVNMITEAGFKIVSMKLTQLTVADAQKFYEVHAARPFYGELVAFMSRGPIVAAILEKDNAVEDFRTLIGATNPADAAEGTIRKKYATSIGENAVHGSDSDENAAIEGAFHFAGREQF</sequence>
<accession>A6GZG2</accession>
<comment type="function">
    <text evidence="1">Major role in the synthesis of nucleoside triphosphates other than ATP. The ATP gamma phosphate is transferred to the NDP beta phosphate via a ping-pong mechanism, using a phosphorylated active-site intermediate.</text>
</comment>
<comment type="catalytic activity">
    <reaction evidence="1">
        <text>a 2'-deoxyribonucleoside 5'-diphosphate + ATP = a 2'-deoxyribonucleoside 5'-triphosphate + ADP</text>
        <dbReference type="Rhea" id="RHEA:44640"/>
        <dbReference type="ChEBI" id="CHEBI:30616"/>
        <dbReference type="ChEBI" id="CHEBI:61560"/>
        <dbReference type="ChEBI" id="CHEBI:73316"/>
        <dbReference type="ChEBI" id="CHEBI:456216"/>
        <dbReference type="EC" id="2.7.4.6"/>
    </reaction>
</comment>
<comment type="catalytic activity">
    <reaction evidence="1">
        <text>a ribonucleoside 5'-diphosphate + ATP = a ribonucleoside 5'-triphosphate + ADP</text>
        <dbReference type="Rhea" id="RHEA:18113"/>
        <dbReference type="ChEBI" id="CHEBI:30616"/>
        <dbReference type="ChEBI" id="CHEBI:57930"/>
        <dbReference type="ChEBI" id="CHEBI:61557"/>
        <dbReference type="ChEBI" id="CHEBI:456216"/>
        <dbReference type="EC" id="2.7.4.6"/>
    </reaction>
</comment>
<comment type="cofactor">
    <cofactor evidence="1">
        <name>Mg(2+)</name>
        <dbReference type="ChEBI" id="CHEBI:18420"/>
    </cofactor>
</comment>
<comment type="subunit">
    <text evidence="1">Homotetramer.</text>
</comment>
<comment type="subcellular location">
    <subcellularLocation>
        <location evidence="1">Cytoplasm</location>
    </subcellularLocation>
</comment>
<comment type="similarity">
    <text evidence="1">Belongs to the NDK family.</text>
</comment>